<proteinExistence type="evidence at protein level"/>
<accession>Q9WU61</accession>
<accession>Q66HQ5</accession>
<accession>Q8VIE8</accession>
<accession>Q8VIE9</accession>
<accession>Q8VIF0</accession>
<accession>Q8VIF1</accession>
<keyword id="KW-0025">Alternative splicing</keyword>
<keyword id="KW-0868">Chloride</keyword>
<keyword id="KW-0869">Chloride channel</keyword>
<keyword id="KW-0256">Endoplasmic reticulum</keyword>
<keyword id="KW-0407">Ion channel</keyword>
<keyword id="KW-0406">Ion transport</keyword>
<keyword id="KW-0472">Membrane</keyword>
<keyword id="KW-0597">Phosphoprotein</keyword>
<keyword id="KW-1185">Reference proteome</keyword>
<keyword id="KW-0732">Signal</keyword>
<keyword id="KW-0812">Transmembrane</keyword>
<keyword id="KW-1133">Transmembrane helix</keyword>
<keyword id="KW-0813">Transport</keyword>
<gene>
    <name evidence="8" type="primary">Clcc1</name>
    <name evidence="6" type="synonym">Mclc</name>
</gene>
<protein>
    <recommendedName>
        <fullName>Chloride channel CLIC-like protein 1</fullName>
    </recommendedName>
    <alternativeName>
        <fullName evidence="1">ER anion channel 1</fullName>
        <shortName evidence="1">ERAC1</shortName>
    </alternativeName>
    <alternativeName>
        <fullName evidence="6">Mid-1-related chloride channel protein 1</fullName>
    </alternativeName>
</protein>
<feature type="signal peptide" evidence="3">
    <location>
        <begin position="1"/>
        <end position="18"/>
    </location>
</feature>
<feature type="chain" id="PRO_0000297684" description="Chloride channel CLIC-like protein 1">
    <location>
        <begin position="19"/>
        <end position="541"/>
    </location>
</feature>
<feature type="topological domain" description="Lumenal" evidence="2">
    <location>
        <begin position="19"/>
        <end position="184"/>
    </location>
</feature>
<feature type="transmembrane region" description="Helical" evidence="3">
    <location>
        <begin position="185"/>
        <end position="205"/>
    </location>
</feature>
<feature type="topological domain" description="Cytoplasmic" evidence="2">
    <location>
        <begin position="206"/>
        <end position="217"/>
    </location>
</feature>
<feature type="transmembrane region" description="Helical" evidence="3">
    <location>
        <begin position="218"/>
        <end position="238"/>
    </location>
</feature>
<feature type="topological domain" description="Lumenal" evidence="2">
    <location>
        <begin position="239"/>
        <end position="329"/>
    </location>
</feature>
<feature type="transmembrane region" description="Helical" evidence="3">
    <location>
        <begin position="330"/>
        <end position="350"/>
    </location>
</feature>
<feature type="topological domain" description="Cytoplasmic" evidence="2">
    <location>
        <begin position="351"/>
        <end position="541"/>
    </location>
</feature>
<feature type="region of interest" description="Disordered" evidence="4">
    <location>
        <begin position="362"/>
        <end position="381"/>
    </location>
</feature>
<feature type="region of interest" description="Disordered" evidence="4">
    <location>
        <begin position="511"/>
        <end position="541"/>
    </location>
</feature>
<feature type="compositionally biased region" description="Basic and acidic residues" evidence="4">
    <location>
        <begin position="364"/>
        <end position="381"/>
    </location>
</feature>
<feature type="compositionally biased region" description="Basic and acidic residues" evidence="4">
    <location>
        <begin position="511"/>
        <end position="522"/>
    </location>
</feature>
<feature type="site" description="Ca(2+)-mediated inhibition of channel activity" evidence="1">
    <location>
        <position position="25"/>
    </location>
</feature>
<feature type="site" description="Ca(2+)-mediated inhibition of channel activity" evidence="1">
    <location>
        <position position="181"/>
    </location>
</feature>
<feature type="modified residue" description="Phosphoserine" evidence="2">
    <location>
        <position position="434"/>
    </location>
</feature>
<feature type="modified residue" description="Phosphoserine" evidence="1">
    <location>
        <position position="438"/>
    </location>
</feature>
<feature type="modified residue" description="Phosphothreonine" evidence="1">
    <location>
        <position position="482"/>
    </location>
</feature>
<feature type="modified residue" description="Phosphoserine" evidence="1">
    <location>
        <position position="504"/>
    </location>
</feature>
<feature type="splice variant" id="VSP_027350" description="In isoform 2 and isoform 4." evidence="6">
    <location>
        <begin position="44"/>
        <end position="77"/>
    </location>
</feature>
<feature type="splice variant" id="VSP_027351" description="In isoform 5." evidence="6">
    <original>GD</original>
    <variation>EP</variation>
    <location>
        <begin position="394"/>
        <end position="395"/>
    </location>
</feature>
<feature type="splice variant" id="VSP_027352" description="In isoform 3 and isoform 4." evidence="6">
    <original>G</original>
    <variation>A</variation>
    <location>
        <position position="394"/>
    </location>
</feature>
<feature type="splice variant" id="VSP_027353" description="In isoform 3 and isoform 4." evidence="6">
    <location>
        <begin position="395"/>
        <end position="541"/>
    </location>
</feature>
<feature type="splice variant" id="VSP_027354" description="In isoform 5." evidence="6">
    <location>
        <begin position="396"/>
        <end position="541"/>
    </location>
</feature>
<feature type="sequence conflict" description="In Ref. 3; AAH81736." evidence="7" ref="3">
    <original>G</original>
    <variation>D</variation>
    <location>
        <position position="57"/>
    </location>
</feature>
<feature type="sequence conflict" description="In Ref. 3; AAH81736." evidence="7" ref="3">
    <original>A</original>
    <variation>S</variation>
    <location>
        <position position="167"/>
    </location>
</feature>
<feature type="sequence conflict" description="In Ref. 3; AAH81736." evidence="7" ref="3">
    <original>V</original>
    <variation>A</variation>
    <location>
        <position position="417"/>
    </location>
</feature>
<organism>
    <name type="scientific">Rattus norvegicus</name>
    <name type="common">Rat</name>
    <dbReference type="NCBI Taxonomy" id="10116"/>
    <lineage>
        <taxon>Eukaryota</taxon>
        <taxon>Metazoa</taxon>
        <taxon>Chordata</taxon>
        <taxon>Craniata</taxon>
        <taxon>Vertebrata</taxon>
        <taxon>Euteleostomi</taxon>
        <taxon>Mammalia</taxon>
        <taxon>Eutheria</taxon>
        <taxon>Euarchontoglires</taxon>
        <taxon>Glires</taxon>
        <taxon>Rodentia</taxon>
        <taxon>Myomorpha</taxon>
        <taxon>Muroidea</taxon>
        <taxon>Muridae</taxon>
        <taxon>Murinae</taxon>
        <taxon>Rattus</taxon>
    </lineage>
</organism>
<reference key="1">
    <citation type="journal article" date="2001" name="J. Biol. Chem.">
        <title>Identification of a novel chloride channel expressed in the endoplasmic reticulum, Golgi apparatus, and nucleus.</title>
        <authorList>
            <person name="Nagasawa M."/>
            <person name="Kanzaki M."/>
            <person name="Iino Y."/>
            <person name="Morishita Y."/>
            <person name="Kojima I."/>
        </authorList>
    </citation>
    <scope>NUCLEOTIDE SEQUENCE [MRNA] (ISOFORMS 1; 2; 3; 4 AND 5)</scope>
    <scope>FUNCTION</scope>
    <scope>TRANSPORTER ACTIVITY</scope>
    <scope>TISSUE SPECIFICITY</scope>
    <source>
        <strain>Sprague-Dawley</strain>
        <tissue>Brain</tissue>
    </source>
</reference>
<reference key="2">
    <citation type="submission" date="1998-12" db="EMBL/GenBank/DDBJ databases">
        <title>Isolation of a set of genes which was expressed specifically in the rat suprachiasmatic nucleus.</title>
        <authorList>
            <person name="Fukuhara C."/>
            <person name="Inouye S.T."/>
            <person name="Aoki K."/>
        </authorList>
    </citation>
    <scope>NUCLEOTIDE SEQUENCE [MRNA] (ISOFORM 1)</scope>
    <source>
        <strain>Wistar</strain>
        <tissue>Brain</tissue>
    </source>
</reference>
<reference key="3">
    <citation type="journal article" date="2004" name="Genome Res.">
        <title>The status, quality, and expansion of the NIH full-length cDNA project: the Mammalian Gene Collection (MGC).</title>
        <authorList>
            <consortium name="The MGC Project Team"/>
        </authorList>
    </citation>
    <scope>NUCLEOTIDE SEQUENCE [LARGE SCALE MRNA] (ISOFORM 1)</scope>
    <source>
        <tissue>Kidney</tissue>
    </source>
</reference>
<name>CLCC1_RAT</name>
<dbReference type="EMBL" id="AB052919">
    <property type="protein sequence ID" value="BAB79264.1"/>
    <property type="molecule type" value="mRNA"/>
</dbReference>
<dbReference type="EMBL" id="AB052920">
    <property type="protein sequence ID" value="BAB79265.1"/>
    <property type="molecule type" value="mRNA"/>
</dbReference>
<dbReference type="EMBL" id="AB052921">
    <property type="protein sequence ID" value="BAB79266.1"/>
    <property type="molecule type" value="mRNA"/>
</dbReference>
<dbReference type="EMBL" id="AB052922">
    <property type="protein sequence ID" value="BAB59019.1"/>
    <property type="molecule type" value="mRNA"/>
</dbReference>
<dbReference type="EMBL" id="AB052923">
    <property type="protein sequence ID" value="BAB79267.1"/>
    <property type="molecule type" value="mRNA"/>
</dbReference>
<dbReference type="EMBL" id="AF117330">
    <property type="protein sequence ID" value="AAD26207.1"/>
    <property type="molecule type" value="mRNA"/>
</dbReference>
<dbReference type="EMBL" id="BC081736">
    <property type="protein sequence ID" value="AAH81736.1"/>
    <property type="molecule type" value="mRNA"/>
</dbReference>
<dbReference type="RefSeq" id="NP_596905.1">
    <property type="nucleotide sequence ID" value="NM_133414.1"/>
</dbReference>
<dbReference type="RefSeq" id="XP_006233189.1">
    <property type="nucleotide sequence ID" value="XM_006233127.2"/>
</dbReference>
<dbReference type="RefSeq" id="XP_006233190.1">
    <property type="nucleotide sequence ID" value="XM_006233128.3"/>
</dbReference>
<dbReference type="FunCoup" id="Q9WU61">
    <property type="interactions" value="2884"/>
</dbReference>
<dbReference type="STRING" id="10116.ENSRNOP00000042185"/>
<dbReference type="iPTMnet" id="Q9WU61"/>
<dbReference type="PhosphoSitePlus" id="Q9WU61"/>
<dbReference type="jPOST" id="Q9WU61"/>
<dbReference type="PaxDb" id="10116-ENSRNOP00000042185"/>
<dbReference type="PeptideAtlas" id="Q9WU61"/>
<dbReference type="GeneID" id="170927"/>
<dbReference type="KEGG" id="rno:170927"/>
<dbReference type="UCSC" id="RGD:708359">
    <molecule id="Q9WU61-1"/>
    <property type="organism name" value="rat"/>
</dbReference>
<dbReference type="AGR" id="RGD:708359"/>
<dbReference type="CTD" id="23155"/>
<dbReference type="RGD" id="708359">
    <property type="gene designation" value="Clcc1"/>
</dbReference>
<dbReference type="eggNOG" id="ENOG502QSP7">
    <property type="taxonomic scope" value="Eukaryota"/>
</dbReference>
<dbReference type="InParanoid" id="Q9WU61"/>
<dbReference type="OrthoDB" id="10037397at2759"/>
<dbReference type="PhylomeDB" id="Q9WU61"/>
<dbReference type="PRO" id="PR:Q9WU61"/>
<dbReference type="Proteomes" id="UP000002494">
    <property type="component" value="Unplaced"/>
</dbReference>
<dbReference type="GO" id="GO:0034707">
    <property type="term" value="C:chloride channel complex"/>
    <property type="evidence" value="ECO:0007669"/>
    <property type="project" value="UniProtKB-KW"/>
</dbReference>
<dbReference type="GO" id="GO:0005737">
    <property type="term" value="C:cytoplasm"/>
    <property type="evidence" value="ECO:0000314"/>
    <property type="project" value="HGNC-UCL"/>
</dbReference>
<dbReference type="GO" id="GO:0005783">
    <property type="term" value="C:endoplasmic reticulum"/>
    <property type="evidence" value="ECO:0000315"/>
    <property type="project" value="HGNC-UCL"/>
</dbReference>
<dbReference type="GO" id="GO:0005789">
    <property type="term" value="C:endoplasmic reticulum membrane"/>
    <property type="evidence" value="ECO:0000266"/>
    <property type="project" value="RGD"/>
</dbReference>
<dbReference type="GO" id="GO:0005794">
    <property type="term" value="C:Golgi apparatus"/>
    <property type="evidence" value="ECO:0000315"/>
    <property type="project" value="HGNC-UCL"/>
</dbReference>
<dbReference type="GO" id="GO:0016020">
    <property type="term" value="C:membrane"/>
    <property type="evidence" value="ECO:0000318"/>
    <property type="project" value="GO_Central"/>
</dbReference>
<dbReference type="GO" id="GO:0044233">
    <property type="term" value="C:mitochondria-associated endoplasmic reticulum membrane contact site"/>
    <property type="evidence" value="ECO:0000250"/>
    <property type="project" value="UniProtKB"/>
</dbReference>
<dbReference type="GO" id="GO:0005634">
    <property type="term" value="C:nucleus"/>
    <property type="evidence" value="ECO:0000314"/>
    <property type="project" value="HGNC-UCL"/>
</dbReference>
<dbReference type="GO" id="GO:0005254">
    <property type="term" value="F:chloride channel activity"/>
    <property type="evidence" value="ECO:0000314"/>
    <property type="project" value="RGD"/>
</dbReference>
<dbReference type="GO" id="GO:0042802">
    <property type="term" value="F:identical protein binding"/>
    <property type="evidence" value="ECO:0000266"/>
    <property type="project" value="RGD"/>
</dbReference>
<dbReference type="GO" id="GO:0006821">
    <property type="term" value="P:chloride transport"/>
    <property type="evidence" value="ECO:0000314"/>
    <property type="project" value="HGNC-UCL"/>
</dbReference>
<dbReference type="GO" id="GO:0032469">
    <property type="term" value="P:endoplasmic reticulum calcium ion homeostasis"/>
    <property type="evidence" value="ECO:0000266"/>
    <property type="project" value="RGD"/>
</dbReference>
<dbReference type="InterPro" id="IPR009231">
    <property type="entry name" value="Chloride_chnl_CLIC-like"/>
</dbReference>
<dbReference type="PANTHER" id="PTHR34093">
    <property type="entry name" value="CHLORIDE CHANNEL CLIC-LIKE PROTEIN 1"/>
    <property type="match status" value="1"/>
</dbReference>
<dbReference type="PANTHER" id="PTHR34093:SF1">
    <property type="entry name" value="CHLORIDE CHANNEL CLIC-LIKE PROTEIN 1"/>
    <property type="match status" value="1"/>
</dbReference>
<dbReference type="Pfam" id="PF05934">
    <property type="entry name" value="MCLC"/>
    <property type="match status" value="1"/>
</dbReference>
<comment type="function">
    <text evidence="1 2 5">Anion-selective channel with Ca(2+)-dependent and voltage-independent gating. Permeable to small monovalent anions with selectivity for bromide &gt; chloride &gt; nitrate &gt; fluoride (By similarity). Operates in the endoplasmic reticulum (ER) membrane where it mediates chloride efflux to compensate for the loss of positive charges from the ER lumen upon Ca(2+) release. Contributes to the maintenance of ER Ca(2+) pools and activation of unfolded protein response to prevent accumulation of misfolded proteins in the ER lumen. Particularly involved in ER homeostasis mechanisms underlying motor neurons and retinal photoreceptors survival (By similarity) (PubMed:11279057).</text>
</comment>
<comment type="catalytic activity">
    <reaction evidence="5">
        <text>chloride(in) = chloride(out)</text>
        <dbReference type="Rhea" id="RHEA:29823"/>
        <dbReference type="ChEBI" id="CHEBI:17996"/>
    </reaction>
</comment>
<comment type="catalytic activity">
    <reaction evidence="2">
        <text>bromide(in) = bromide(out)</text>
        <dbReference type="Rhea" id="RHEA:75383"/>
        <dbReference type="ChEBI" id="CHEBI:15858"/>
    </reaction>
</comment>
<comment type="catalytic activity">
    <reaction evidence="2">
        <text>nitrate(in) = nitrate(out)</text>
        <dbReference type="Rhea" id="RHEA:34923"/>
        <dbReference type="ChEBI" id="CHEBI:17632"/>
    </reaction>
</comment>
<comment type="catalytic activity">
    <reaction evidence="2">
        <text>fluoride(in) = fluoride(out)</text>
        <dbReference type="Rhea" id="RHEA:76159"/>
        <dbReference type="ChEBI" id="CHEBI:17051"/>
    </reaction>
</comment>
<comment type="subunit">
    <text evidence="1">Homomultimers. Interacts with mitochondrial protein PIGBOS1 (via C-terminus); the interaction occurs at the mitochondria-associated endoplasmic reticulum (ER) membrane, a zone of contact between the ER and mitochondrial membranes, but does not appear to play a role in ER-mitochondria tethering and is not affected by ER stress. Interacts with CALR.</text>
</comment>
<comment type="subcellular location">
    <subcellularLocation>
        <location evidence="5">Endoplasmic reticulum membrane</location>
        <topology evidence="3">Multi-pass membrane protein</topology>
    </subcellularLocation>
    <text evidence="1 2">Within the endoplasmic reticulum (ER), localizes to the mitochondria-associated ER membrane, a zone of contact between the ER and mitochondrial membranes. Enriched in the rough ER.</text>
</comment>
<comment type="alternative products">
    <event type="alternative splicing"/>
    <isoform>
        <id>Q9WU61-1</id>
        <name>1</name>
        <name>rMCLC-1</name>
        <sequence type="displayed"/>
    </isoform>
    <isoform>
        <id>Q9WU61-2</id>
        <name>2</name>
        <name>rMCLC-2</name>
        <sequence type="described" ref="VSP_027350"/>
    </isoform>
    <isoform>
        <id>Q9WU61-3</id>
        <name>3</name>
        <name>rMCLC-3</name>
        <sequence type="described" ref="VSP_027352 VSP_027353"/>
    </isoform>
    <isoform>
        <id>Q9WU61-4</id>
        <name>4</name>
        <name>rMCLC-4</name>
        <sequence type="described" ref="VSP_027350 VSP_027352 VSP_027353"/>
    </isoform>
    <isoform>
        <id>Q9WU61-5</id>
        <name>5</name>
        <name>rMCLC-5</name>
        <sequence type="described" ref="VSP_027351 VSP_027354"/>
    </isoform>
</comment>
<comment type="tissue specificity">
    <text evidence="5">Expressed in testis (spermatocytes), liver and lung (at protein level). Expressed in spleen, liver, testis, kidney, heart, brain and lung.</text>
</comment>
<comment type="similarity">
    <text evidence="7">Belongs to the chloride channel MCLC family.</text>
</comment>
<evidence type="ECO:0000250" key="1">
    <source>
        <dbReference type="UniProtKB" id="Q96S66"/>
    </source>
</evidence>
<evidence type="ECO:0000250" key="2">
    <source>
        <dbReference type="UniProtKB" id="Q99LI2"/>
    </source>
</evidence>
<evidence type="ECO:0000255" key="3"/>
<evidence type="ECO:0000256" key="4">
    <source>
        <dbReference type="SAM" id="MobiDB-lite"/>
    </source>
</evidence>
<evidence type="ECO:0000269" key="5">
    <source>
    </source>
</evidence>
<evidence type="ECO:0000303" key="6">
    <source>
    </source>
</evidence>
<evidence type="ECO:0000305" key="7"/>
<evidence type="ECO:0000312" key="8">
    <source>
        <dbReference type="RGD" id="708359"/>
    </source>
</evidence>
<sequence length="541" mass="61174">MLCSLLLCGCLLLITGYAHDDDWIDPTDMLNYDAASGTMRKSQAKYGTSEKKEVNPGLSDAQELSDCLQRLDSLTHKVDDCEKKKMKDYESQSNPVFRRYLNKILIEAGKLGLPDEDRVDVRYDAEILLTRQTLLEIQKFLSGEEWKPGALDDALSDILTNFKSHDAEAWKWQFEDYFGVDPYNVFMVLLCLLCIVALVATELWTYVRWHTQLKRVCIISFLVSLGWNWIYLYKVAFAQHQANVAKMAPLNDVCAKKMDWTENLWEWFRISWTYKDDPCQKYYELLIVNPIWLVPPTKALAVTFTNFVTEPLKYIGKGTGEFIKALMKEIPVLLQIPVLVILALAVLGFCYGAGQSVPMLRHFRGPEREPPRALEPDDRRRQKELDYRFHGGAGDADFSYRGPAGSIEQGPYDKMHVCERDVLRQRQVNMRFPSGNKSPEVLRAFDLPDTEAQEHPEVVPSHKPSIVNTSLKETSELPRESTLAECSQCAKDGSGQVPSTAESSPIVEKAQLKTDSECRPHSTEAAAAAARGTDPVSSPCG</sequence>